<proteinExistence type="inferred from homology"/>
<reference key="1">
    <citation type="journal article" date="2008" name="PLoS ONE">
        <title>A recalibrated molecular clock and independent origins for the cholera pandemic clones.</title>
        <authorList>
            <person name="Feng L."/>
            <person name="Reeves P.R."/>
            <person name="Lan R."/>
            <person name="Ren Y."/>
            <person name="Gao C."/>
            <person name="Zhou Z."/>
            <person name="Ren Y."/>
            <person name="Cheng J."/>
            <person name="Wang W."/>
            <person name="Wang J."/>
            <person name="Qian W."/>
            <person name="Li D."/>
            <person name="Wang L."/>
        </authorList>
    </citation>
    <scope>NUCLEOTIDE SEQUENCE [LARGE SCALE GENOMIC DNA]</scope>
    <source>
        <strain>M66-2</strain>
    </source>
</reference>
<evidence type="ECO:0000255" key="1">
    <source>
        <dbReference type="HAMAP-Rule" id="MF_00661"/>
    </source>
</evidence>
<evidence type="ECO:0000256" key="2">
    <source>
        <dbReference type="SAM" id="MobiDB-lite"/>
    </source>
</evidence>
<protein>
    <recommendedName>
        <fullName evidence="1">ATP-dependent RNA helicase RhlB</fullName>
        <ecNumber evidence="1">3.6.4.13</ecNumber>
    </recommendedName>
</protein>
<name>RHLB_VIBCM</name>
<keyword id="KW-0067">ATP-binding</keyword>
<keyword id="KW-0963">Cytoplasm</keyword>
<keyword id="KW-0347">Helicase</keyword>
<keyword id="KW-0378">Hydrolase</keyword>
<keyword id="KW-0547">Nucleotide-binding</keyword>
<keyword id="KW-0694">RNA-binding</keyword>
<gene>
    <name evidence="1" type="primary">rhlB</name>
    <name type="ordered locus">VCM66_0290</name>
</gene>
<dbReference type="EC" id="3.6.4.13" evidence="1"/>
<dbReference type="EMBL" id="CP001233">
    <property type="protein sequence ID" value="ACP04619.1"/>
    <property type="molecule type" value="Genomic_DNA"/>
</dbReference>
<dbReference type="RefSeq" id="WP_000750771.1">
    <property type="nucleotide sequence ID" value="NC_012578.1"/>
</dbReference>
<dbReference type="SMR" id="C3LQR1"/>
<dbReference type="GeneID" id="69720972"/>
<dbReference type="KEGG" id="vcm:VCM66_0290"/>
<dbReference type="HOGENOM" id="CLU_003041_28_3_6"/>
<dbReference type="Proteomes" id="UP000001217">
    <property type="component" value="Chromosome I"/>
</dbReference>
<dbReference type="GO" id="GO:0005829">
    <property type="term" value="C:cytosol"/>
    <property type="evidence" value="ECO:0007669"/>
    <property type="project" value="TreeGrafter"/>
</dbReference>
<dbReference type="GO" id="GO:0005524">
    <property type="term" value="F:ATP binding"/>
    <property type="evidence" value="ECO:0007669"/>
    <property type="project" value="UniProtKB-UniRule"/>
</dbReference>
<dbReference type="GO" id="GO:0016887">
    <property type="term" value="F:ATP hydrolysis activity"/>
    <property type="evidence" value="ECO:0007669"/>
    <property type="project" value="RHEA"/>
</dbReference>
<dbReference type="GO" id="GO:0003723">
    <property type="term" value="F:RNA binding"/>
    <property type="evidence" value="ECO:0007669"/>
    <property type="project" value="UniProtKB-UniRule"/>
</dbReference>
<dbReference type="GO" id="GO:0003724">
    <property type="term" value="F:RNA helicase activity"/>
    <property type="evidence" value="ECO:0007669"/>
    <property type="project" value="UniProtKB-UniRule"/>
</dbReference>
<dbReference type="GO" id="GO:0006401">
    <property type="term" value="P:RNA catabolic process"/>
    <property type="evidence" value="ECO:0007669"/>
    <property type="project" value="UniProtKB-UniRule"/>
</dbReference>
<dbReference type="CDD" id="cd00268">
    <property type="entry name" value="DEADc"/>
    <property type="match status" value="1"/>
</dbReference>
<dbReference type="CDD" id="cd18787">
    <property type="entry name" value="SF2_C_DEAD"/>
    <property type="match status" value="1"/>
</dbReference>
<dbReference type="FunFam" id="3.40.50.300:FF:000008">
    <property type="entry name" value="ATP-dependent RNA helicase RhlB"/>
    <property type="match status" value="1"/>
</dbReference>
<dbReference type="FunFam" id="3.40.50.300:FF:000312">
    <property type="entry name" value="ATP-dependent RNA helicase RhlB"/>
    <property type="match status" value="1"/>
</dbReference>
<dbReference type="Gene3D" id="3.40.50.300">
    <property type="entry name" value="P-loop containing nucleotide triphosphate hydrolases"/>
    <property type="match status" value="2"/>
</dbReference>
<dbReference type="HAMAP" id="MF_00661">
    <property type="entry name" value="DEAD_helicase_RhlB"/>
    <property type="match status" value="1"/>
</dbReference>
<dbReference type="InterPro" id="IPR011545">
    <property type="entry name" value="DEAD/DEAH_box_helicase_dom"/>
</dbReference>
<dbReference type="InterPro" id="IPR050079">
    <property type="entry name" value="DEAD_box_RNA_helicase"/>
</dbReference>
<dbReference type="InterPro" id="IPR014001">
    <property type="entry name" value="Helicase_ATP-bd"/>
</dbReference>
<dbReference type="InterPro" id="IPR001650">
    <property type="entry name" value="Helicase_C-like"/>
</dbReference>
<dbReference type="InterPro" id="IPR027417">
    <property type="entry name" value="P-loop_NTPase"/>
</dbReference>
<dbReference type="InterPro" id="IPR000629">
    <property type="entry name" value="RNA-helicase_DEAD-box_CS"/>
</dbReference>
<dbReference type="InterPro" id="IPR023554">
    <property type="entry name" value="RNA_helicase_ATP-dep_RhlB"/>
</dbReference>
<dbReference type="InterPro" id="IPR014014">
    <property type="entry name" value="RNA_helicase_DEAD_Q_motif"/>
</dbReference>
<dbReference type="NCBIfam" id="NF003419">
    <property type="entry name" value="PRK04837.1"/>
    <property type="match status" value="1"/>
</dbReference>
<dbReference type="PANTHER" id="PTHR47959:SF10">
    <property type="entry name" value="ATP-DEPENDENT RNA HELICASE RHLB"/>
    <property type="match status" value="1"/>
</dbReference>
<dbReference type="PANTHER" id="PTHR47959">
    <property type="entry name" value="ATP-DEPENDENT RNA HELICASE RHLE-RELATED"/>
    <property type="match status" value="1"/>
</dbReference>
<dbReference type="Pfam" id="PF00270">
    <property type="entry name" value="DEAD"/>
    <property type="match status" value="1"/>
</dbReference>
<dbReference type="Pfam" id="PF00271">
    <property type="entry name" value="Helicase_C"/>
    <property type="match status" value="1"/>
</dbReference>
<dbReference type="SMART" id="SM00487">
    <property type="entry name" value="DEXDc"/>
    <property type="match status" value="1"/>
</dbReference>
<dbReference type="SMART" id="SM00490">
    <property type="entry name" value="HELICc"/>
    <property type="match status" value="1"/>
</dbReference>
<dbReference type="SUPFAM" id="SSF52540">
    <property type="entry name" value="P-loop containing nucleoside triphosphate hydrolases"/>
    <property type="match status" value="1"/>
</dbReference>
<dbReference type="PROSITE" id="PS00039">
    <property type="entry name" value="DEAD_ATP_HELICASE"/>
    <property type="match status" value="1"/>
</dbReference>
<dbReference type="PROSITE" id="PS51192">
    <property type="entry name" value="HELICASE_ATP_BIND_1"/>
    <property type="match status" value="1"/>
</dbReference>
<dbReference type="PROSITE" id="PS51194">
    <property type="entry name" value="HELICASE_CTER"/>
    <property type="match status" value="1"/>
</dbReference>
<dbReference type="PROSITE" id="PS51195">
    <property type="entry name" value="Q_MOTIF"/>
    <property type="match status" value="1"/>
</dbReference>
<sequence length="438" mass="49072">MKKTHITEHKFADFGLQPQVIDGLEKKGFVYCTPIQALALPVLLSGQDIAGQAQTGTGKTLAFLTATFNHLLTTPAAEGRAETQPRAIIMAPTRELAIQIFNDAEPLLASTGLKAALAYGGESYDKQLAKLQSGVDILIGTTGRIIDFYKQRVFNLNHIQAVVLDEADRMFDLGFIKDIRFLFRRMPEPKDRLNMLFSATLSYRVQELAFEHMNNPEHVVVEPEQKTGHRIQEELFYPSNEHKMALLQTLIEEEWPDRAIIFANTKHRCEQIWAHLAADNHRVGLLTGDVPQKKRERILEQFTQGDVDILVATDVAARGLHIPQVTHVFNYDLPDDCEDYVHRIGRTGRAGASGHSISFACEEYAINLPAIESYIEHAIPTSDYDPSALLTDLPAPLSLRSSPQQRRTNTAGSRNSNNGGNRKPQQRRPRAPRPKKEA</sequence>
<organism>
    <name type="scientific">Vibrio cholerae serotype O1 (strain M66-2)</name>
    <dbReference type="NCBI Taxonomy" id="579112"/>
    <lineage>
        <taxon>Bacteria</taxon>
        <taxon>Pseudomonadati</taxon>
        <taxon>Pseudomonadota</taxon>
        <taxon>Gammaproteobacteria</taxon>
        <taxon>Vibrionales</taxon>
        <taxon>Vibrionaceae</taxon>
        <taxon>Vibrio</taxon>
    </lineage>
</organism>
<feature type="chain" id="PRO_1000147585" description="ATP-dependent RNA helicase RhlB">
    <location>
        <begin position="1"/>
        <end position="438"/>
    </location>
</feature>
<feature type="domain" description="Helicase ATP-binding" evidence="1">
    <location>
        <begin position="40"/>
        <end position="219"/>
    </location>
</feature>
<feature type="domain" description="Helicase C-terminal" evidence="1">
    <location>
        <begin position="245"/>
        <end position="390"/>
    </location>
</feature>
<feature type="region of interest" description="Disordered" evidence="2">
    <location>
        <begin position="394"/>
        <end position="438"/>
    </location>
</feature>
<feature type="short sequence motif" description="Q motif">
    <location>
        <begin position="9"/>
        <end position="37"/>
    </location>
</feature>
<feature type="short sequence motif" description="DEAD box">
    <location>
        <begin position="165"/>
        <end position="168"/>
    </location>
</feature>
<feature type="compositionally biased region" description="Low complexity" evidence="2">
    <location>
        <begin position="406"/>
        <end position="423"/>
    </location>
</feature>
<feature type="compositionally biased region" description="Basic residues" evidence="2">
    <location>
        <begin position="424"/>
        <end position="438"/>
    </location>
</feature>
<feature type="binding site" evidence="1">
    <location>
        <begin position="53"/>
        <end position="60"/>
    </location>
    <ligand>
        <name>ATP</name>
        <dbReference type="ChEBI" id="CHEBI:30616"/>
    </ligand>
</feature>
<accession>C3LQR1</accession>
<comment type="function">
    <text evidence="1">DEAD-box RNA helicase involved in RNA degradation. Has RNA-dependent ATPase activity and unwinds double-stranded RNA.</text>
</comment>
<comment type="catalytic activity">
    <reaction evidence="1">
        <text>ATP + H2O = ADP + phosphate + H(+)</text>
        <dbReference type="Rhea" id="RHEA:13065"/>
        <dbReference type="ChEBI" id="CHEBI:15377"/>
        <dbReference type="ChEBI" id="CHEBI:15378"/>
        <dbReference type="ChEBI" id="CHEBI:30616"/>
        <dbReference type="ChEBI" id="CHEBI:43474"/>
        <dbReference type="ChEBI" id="CHEBI:456216"/>
        <dbReference type="EC" id="3.6.4.13"/>
    </reaction>
</comment>
<comment type="subunit">
    <text evidence="1">Component of the RNA degradosome, which is a multiprotein complex involved in RNA processing and mRNA degradation.</text>
</comment>
<comment type="subcellular location">
    <subcellularLocation>
        <location evidence="1">Cytoplasm</location>
    </subcellularLocation>
</comment>
<comment type="similarity">
    <text evidence="1">Belongs to the DEAD box helicase family. RhlB subfamily.</text>
</comment>